<comment type="catalytic activity">
    <reaction evidence="1">
        <text>diphosphate + H2O = 2 phosphate + H(+)</text>
        <dbReference type="Rhea" id="RHEA:24576"/>
        <dbReference type="ChEBI" id="CHEBI:15377"/>
        <dbReference type="ChEBI" id="CHEBI:15378"/>
        <dbReference type="ChEBI" id="CHEBI:33019"/>
        <dbReference type="ChEBI" id="CHEBI:43474"/>
        <dbReference type="EC" id="3.6.1.1"/>
    </reaction>
</comment>
<comment type="cofactor">
    <cofactor evidence="1">
        <name>Mn(2+)</name>
        <dbReference type="ChEBI" id="CHEBI:29035"/>
    </cofactor>
    <text evidence="1">Binds 2 manganese ions per subunit.</text>
</comment>
<comment type="subcellular location">
    <subcellularLocation>
        <location evidence="1">Cytoplasm</location>
    </subcellularLocation>
</comment>
<comment type="similarity">
    <text evidence="1">Belongs to the PPase class C family.</text>
</comment>
<dbReference type="EC" id="3.6.1.1" evidence="1"/>
<dbReference type="EMBL" id="CP001129">
    <property type="protein sequence ID" value="ACG62955.1"/>
    <property type="molecule type" value="Genomic_DNA"/>
</dbReference>
<dbReference type="RefSeq" id="WP_012516211.1">
    <property type="nucleotide sequence ID" value="NC_011134.1"/>
</dbReference>
<dbReference type="SMR" id="B4U4N8"/>
<dbReference type="KEGG" id="sez:Sez_1624"/>
<dbReference type="HOGENOM" id="CLU_025243_0_1_9"/>
<dbReference type="Proteomes" id="UP000001873">
    <property type="component" value="Chromosome"/>
</dbReference>
<dbReference type="GO" id="GO:0005737">
    <property type="term" value="C:cytoplasm"/>
    <property type="evidence" value="ECO:0007669"/>
    <property type="project" value="UniProtKB-SubCell"/>
</dbReference>
<dbReference type="GO" id="GO:0004427">
    <property type="term" value="F:inorganic diphosphate phosphatase activity"/>
    <property type="evidence" value="ECO:0007669"/>
    <property type="project" value="UniProtKB-UniRule"/>
</dbReference>
<dbReference type="GO" id="GO:0030145">
    <property type="term" value="F:manganese ion binding"/>
    <property type="evidence" value="ECO:0007669"/>
    <property type="project" value="UniProtKB-UniRule"/>
</dbReference>
<dbReference type="FunFam" id="3.10.310.20:FF:000001">
    <property type="entry name" value="Probable manganese-dependent inorganic pyrophosphatase"/>
    <property type="match status" value="1"/>
</dbReference>
<dbReference type="FunFam" id="3.90.1640.10:FF:000001">
    <property type="entry name" value="Probable manganese-dependent inorganic pyrophosphatase"/>
    <property type="match status" value="1"/>
</dbReference>
<dbReference type="Gene3D" id="3.10.310.20">
    <property type="entry name" value="DHHA2 domain"/>
    <property type="match status" value="1"/>
</dbReference>
<dbReference type="Gene3D" id="3.90.1640.10">
    <property type="entry name" value="inorganic pyrophosphatase (n-terminal core)"/>
    <property type="match status" value="1"/>
</dbReference>
<dbReference type="HAMAP" id="MF_00207">
    <property type="entry name" value="PPase_C"/>
    <property type="match status" value="1"/>
</dbReference>
<dbReference type="InterPro" id="IPR001667">
    <property type="entry name" value="DDH_dom"/>
</dbReference>
<dbReference type="InterPro" id="IPR038763">
    <property type="entry name" value="DHH_sf"/>
</dbReference>
<dbReference type="InterPro" id="IPR004097">
    <property type="entry name" value="DHHA2"/>
</dbReference>
<dbReference type="InterPro" id="IPR038222">
    <property type="entry name" value="DHHA2_dom_sf"/>
</dbReference>
<dbReference type="InterPro" id="IPR022934">
    <property type="entry name" value="Mn-dep_inorganic_PyrPase"/>
</dbReference>
<dbReference type="InterPro" id="IPR051319">
    <property type="entry name" value="Oligoribo/pAp-PDE_c-di-AMP_PDE"/>
</dbReference>
<dbReference type="NCBIfam" id="NF003877">
    <property type="entry name" value="PRK05427.1"/>
    <property type="match status" value="1"/>
</dbReference>
<dbReference type="PANTHER" id="PTHR47618">
    <property type="entry name" value="BIFUNCTIONAL OLIGORIBONUCLEASE AND PAP PHOSPHATASE NRNA"/>
    <property type="match status" value="1"/>
</dbReference>
<dbReference type="PANTHER" id="PTHR47618:SF1">
    <property type="entry name" value="BIFUNCTIONAL OLIGORIBONUCLEASE AND PAP PHOSPHATASE NRNA"/>
    <property type="match status" value="1"/>
</dbReference>
<dbReference type="Pfam" id="PF01368">
    <property type="entry name" value="DHH"/>
    <property type="match status" value="1"/>
</dbReference>
<dbReference type="Pfam" id="PF02833">
    <property type="entry name" value="DHHA2"/>
    <property type="match status" value="1"/>
</dbReference>
<dbReference type="SMART" id="SM01131">
    <property type="entry name" value="DHHA2"/>
    <property type="match status" value="1"/>
</dbReference>
<dbReference type="SUPFAM" id="SSF64182">
    <property type="entry name" value="DHH phosphoesterases"/>
    <property type="match status" value="1"/>
</dbReference>
<feature type="chain" id="PRO_1000099651" description="Probable manganese-dependent inorganic pyrophosphatase">
    <location>
        <begin position="1"/>
        <end position="311"/>
    </location>
</feature>
<feature type="binding site" evidence="1">
    <location>
        <position position="9"/>
    </location>
    <ligand>
        <name>Mn(2+)</name>
        <dbReference type="ChEBI" id="CHEBI:29035"/>
        <label>1</label>
    </ligand>
</feature>
<feature type="binding site" evidence="1">
    <location>
        <position position="13"/>
    </location>
    <ligand>
        <name>Mn(2+)</name>
        <dbReference type="ChEBI" id="CHEBI:29035"/>
        <label>1</label>
    </ligand>
</feature>
<feature type="binding site" evidence="1">
    <location>
        <position position="15"/>
    </location>
    <ligand>
        <name>Mn(2+)</name>
        <dbReference type="ChEBI" id="CHEBI:29035"/>
        <label>2</label>
    </ligand>
</feature>
<feature type="binding site" evidence="1">
    <location>
        <position position="77"/>
    </location>
    <ligand>
        <name>Mn(2+)</name>
        <dbReference type="ChEBI" id="CHEBI:29035"/>
        <label>1</label>
    </ligand>
</feature>
<feature type="binding site" evidence="1">
    <location>
        <position position="77"/>
    </location>
    <ligand>
        <name>Mn(2+)</name>
        <dbReference type="ChEBI" id="CHEBI:29035"/>
        <label>2</label>
    </ligand>
</feature>
<feature type="binding site" evidence="1">
    <location>
        <position position="99"/>
    </location>
    <ligand>
        <name>Mn(2+)</name>
        <dbReference type="ChEBI" id="CHEBI:29035"/>
        <label>2</label>
    </ligand>
</feature>
<feature type="binding site" evidence="1">
    <location>
        <position position="151"/>
    </location>
    <ligand>
        <name>Mn(2+)</name>
        <dbReference type="ChEBI" id="CHEBI:29035"/>
        <label>2</label>
    </ligand>
</feature>
<proteinExistence type="inferred from homology"/>
<protein>
    <recommendedName>
        <fullName evidence="1">Probable manganese-dependent inorganic pyrophosphatase</fullName>
        <ecNumber evidence="1">3.6.1.1</ecNumber>
    </recommendedName>
    <alternativeName>
        <fullName evidence="1">Pyrophosphate phospho-hydrolase</fullName>
        <shortName evidence="1">PPase</shortName>
    </alternativeName>
</protein>
<organism>
    <name type="scientific">Streptococcus equi subsp. zooepidemicus (strain MGCS10565)</name>
    <dbReference type="NCBI Taxonomy" id="552526"/>
    <lineage>
        <taxon>Bacteria</taxon>
        <taxon>Bacillati</taxon>
        <taxon>Bacillota</taxon>
        <taxon>Bacilli</taxon>
        <taxon>Lactobacillales</taxon>
        <taxon>Streptococcaceae</taxon>
        <taxon>Streptococcus</taxon>
    </lineage>
</organism>
<gene>
    <name evidence="1" type="primary">ppaC</name>
    <name type="ordered locus">Sez_1624</name>
</gene>
<keyword id="KW-0963">Cytoplasm</keyword>
<keyword id="KW-0378">Hydrolase</keyword>
<keyword id="KW-0464">Manganese</keyword>
<keyword id="KW-0479">Metal-binding</keyword>
<reference key="1">
    <citation type="journal article" date="2008" name="PLoS ONE">
        <title>Genome sequence of a lancefield group C Streptococcus zooepidemicus strain causing epidemic nephritis: new information about an old disease.</title>
        <authorList>
            <person name="Beres S.B."/>
            <person name="Sesso R."/>
            <person name="Pinto S.W.L."/>
            <person name="Hoe N.P."/>
            <person name="Porcella S.F."/>
            <person name="Deleo F.R."/>
            <person name="Musser J.M."/>
        </authorList>
    </citation>
    <scope>NUCLEOTIDE SEQUENCE [LARGE SCALE GENOMIC DNA]</scope>
    <source>
        <strain>MGCS10565</strain>
    </source>
</reference>
<name>PPAC_STREM</name>
<sequence>MSKLLVFGHQNPDTDAIASSYAFDYLAKKAFDLDTEVVALGDPNEETAFALDYFGVSAPRVVTSAKAEGASHVILTDHNEFPQSISDIREVEVYGIVDHHRVANFETANPLYMRVEPVGSASSIVYRLFKENRVDVPKDIAGLLLSGLISDTLLLKSPTTHASDHRVAVELAELAGVKLEEYGMAMLKAGTNLASKSEAELIDIDAKTFELNGNAVRVAQVNTVDIAEVLERKEAIEAAIKEVMASEGYSDFVLMITDIVNSNSEILALGANMDKVETAFDFKLEDNHAFLAGAVSRKKQVVPQLTESFGA</sequence>
<evidence type="ECO:0000255" key="1">
    <source>
        <dbReference type="HAMAP-Rule" id="MF_00207"/>
    </source>
</evidence>
<accession>B4U4N8</accession>